<feature type="chain" id="PRO_0000211843" description="UPF0325 protein YaeH">
    <location>
        <begin position="1"/>
        <end position="128"/>
    </location>
</feature>
<proteinExistence type="inferred from homology"/>
<sequence length="128" mass="15094">MYDNLKSLGITNPEEIDRYSLRQEANNDILKIYFQKDRGEFFAKSVKFKYPRQRKTVVADGIGQGYKEVQEISPNLRYVIDELDQICQRDRSELDLKRKILDDLRHLESVVANKISEIEADLDKLTRK</sequence>
<name>YAEH_SALTI</name>
<evidence type="ECO:0000255" key="1">
    <source>
        <dbReference type="HAMAP-Rule" id="MF_01519"/>
    </source>
</evidence>
<gene>
    <name evidence="1" type="primary">yaeH</name>
    <name type="ordered locus">STY0233</name>
    <name type="ordered locus">t0212</name>
</gene>
<dbReference type="EMBL" id="AL513382">
    <property type="protein sequence ID" value="CAD01365.1"/>
    <property type="molecule type" value="Genomic_DNA"/>
</dbReference>
<dbReference type="EMBL" id="AE014613">
    <property type="protein sequence ID" value="AAO67943.1"/>
    <property type="molecule type" value="Genomic_DNA"/>
</dbReference>
<dbReference type="RefSeq" id="NP_454819.1">
    <property type="nucleotide sequence ID" value="NC_003198.1"/>
</dbReference>
<dbReference type="RefSeq" id="WP_000272193.1">
    <property type="nucleotide sequence ID" value="NZ_WSUR01000009.1"/>
</dbReference>
<dbReference type="SMR" id="Q7ANK1"/>
<dbReference type="STRING" id="220341.gene:17584267"/>
<dbReference type="KEGG" id="stt:t0212"/>
<dbReference type="KEGG" id="sty:STY0233"/>
<dbReference type="PATRIC" id="fig|220341.7.peg.234"/>
<dbReference type="eggNOG" id="ENOG502ZBV4">
    <property type="taxonomic scope" value="Bacteria"/>
</dbReference>
<dbReference type="HOGENOM" id="CLU_136774_0_0_6"/>
<dbReference type="OMA" id="QLCQRDQ"/>
<dbReference type="OrthoDB" id="5624524at2"/>
<dbReference type="Proteomes" id="UP000000541">
    <property type="component" value="Chromosome"/>
</dbReference>
<dbReference type="Proteomes" id="UP000002670">
    <property type="component" value="Chromosome"/>
</dbReference>
<dbReference type="HAMAP" id="MF_01519">
    <property type="entry name" value="UPF0325"/>
    <property type="match status" value="1"/>
</dbReference>
<dbReference type="InterPro" id="IPR020911">
    <property type="entry name" value="UPF0325"/>
</dbReference>
<dbReference type="NCBIfam" id="NF010213">
    <property type="entry name" value="PRK13677.1"/>
    <property type="match status" value="1"/>
</dbReference>
<dbReference type="Pfam" id="PF11944">
    <property type="entry name" value="DUF3461"/>
    <property type="match status" value="1"/>
</dbReference>
<protein>
    <recommendedName>
        <fullName evidence="1">UPF0325 protein YaeH</fullName>
    </recommendedName>
</protein>
<comment type="similarity">
    <text evidence="1">Belongs to the UPF0325 family.</text>
</comment>
<organism>
    <name type="scientific">Salmonella typhi</name>
    <dbReference type="NCBI Taxonomy" id="90370"/>
    <lineage>
        <taxon>Bacteria</taxon>
        <taxon>Pseudomonadati</taxon>
        <taxon>Pseudomonadota</taxon>
        <taxon>Gammaproteobacteria</taxon>
        <taxon>Enterobacterales</taxon>
        <taxon>Enterobacteriaceae</taxon>
        <taxon>Salmonella</taxon>
    </lineage>
</organism>
<accession>Q7ANK1</accession>
<accession>Q8XG22</accession>
<reference key="1">
    <citation type="journal article" date="2001" name="Nature">
        <title>Complete genome sequence of a multiple drug resistant Salmonella enterica serovar Typhi CT18.</title>
        <authorList>
            <person name="Parkhill J."/>
            <person name="Dougan G."/>
            <person name="James K.D."/>
            <person name="Thomson N.R."/>
            <person name="Pickard D."/>
            <person name="Wain J."/>
            <person name="Churcher C.M."/>
            <person name="Mungall K.L."/>
            <person name="Bentley S.D."/>
            <person name="Holden M.T.G."/>
            <person name="Sebaihia M."/>
            <person name="Baker S."/>
            <person name="Basham D."/>
            <person name="Brooks K."/>
            <person name="Chillingworth T."/>
            <person name="Connerton P."/>
            <person name="Cronin A."/>
            <person name="Davis P."/>
            <person name="Davies R.M."/>
            <person name="Dowd L."/>
            <person name="White N."/>
            <person name="Farrar J."/>
            <person name="Feltwell T."/>
            <person name="Hamlin N."/>
            <person name="Haque A."/>
            <person name="Hien T.T."/>
            <person name="Holroyd S."/>
            <person name="Jagels K."/>
            <person name="Krogh A."/>
            <person name="Larsen T.S."/>
            <person name="Leather S."/>
            <person name="Moule S."/>
            <person name="O'Gaora P."/>
            <person name="Parry C."/>
            <person name="Quail M.A."/>
            <person name="Rutherford K.M."/>
            <person name="Simmonds M."/>
            <person name="Skelton J."/>
            <person name="Stevens K."/>
            <person name="Whitehead S."/>
            <person name="Barrell B.G."/>
        </authorList>
    </citation>
    <scope>NUCLEOTIDE SEQUENCE [LARGE SCALE GENOMIC DNA]</scope>
    <source>
        <strain>CT18</strain>
    </source>
</reference>
<reference key="2">
    <citation type="journal article" date="2003" name="J. Bacteriol.">
        <title>Comparative genomics of Salmonella enterica serovar Typhi strains Ty2 and CT18.</title>
        <authorList>
            <person name="Deng W."/>
            <person name="Liou S.-R."/>
            <person name="Plunkett G. III"/>
            <person name="Mayhew G.F."/>
            <person name="Rose D.J."/>
            <person name="Burland V."/>
            <person name="Kodoyianni V."/>
            <person name="Schwartz D.C."/>
            <person name="Blattner F.R."/>
        </authorList>
    </citation>
    <scope>NUCLEOTIDE SEQUENCE [LARGE SCALE GENOMIC DNA]</scope>
    <source>
        <strain>ATCC 700931 / Ty2</strain>
    </source>
</reference>